<comment type="function">
    <text>CNTF is a survival factor for various neuronal cell types. Seems to prevent the degeneration of motor axons after axotomy.</text>
</comment>
<comment type="subunit">
    <text>Homodimer.</text>
</comment>
<comment type="interaction">
    <interactant intactId="EBI-1050897">
        <id>P26441</id>
    </interactant>
    <interactant intactId="EBI-8466265">
        <id>Q96MA6</id>
        <label>AK8</label>
    </interactant>
    <organismsDiffer>false</organismsDiffer>
    <experiments>3</experiments>
</comment>
<comment type="interaction">
    <interactant intactId="EBI-1050897">
        <id>P26441</id>
    </interactant>
    <interactant intactId="EBI-1222467">
        <id>P02649</id>
        <label>APOE</label>
    </interactant>
    <organismsDiffer>false</organismsDiffer>
    <experiments>3</experiments>
</comment>
<comment type="interaction">
    <interactant intactId="EBI-1050897">
        <id>P26441</id>
    </interactant>
    <interactant intactId="EBI-77613">
        <id>P05067</id>
        <label>APP</label>
    </interactant>
    <organismsDiffer>false</organismsDiffer>
    <experiments>3</experiments>
</comment>
<comment type="interaction">
    <interactant intactId="EBI-1050897">
        <id>P26441</id>
    </interactant>
    <interactant intactId="EBI-743758">
        <id>P26992</id>
        <label>CNTFR</label>
    </interactant>
    <organismsDiffer>false</organismsDiffer>
    <experiments>13</experiments>
</comment>
<comment type="interaction">
    <interactant intactId="EBI-1050897">
        <id>P26441</id>
    </interactant>
    <interactant intactId="EBI-3867333">
        <id>A8MQ03</id>
        <label>CYSRT1</label>
    </interactant>
    <organismsDiffer>false</organismsDiffer>
    <experiments>3</experiments>
</comment>
<comment type="interaction">
    <interactant intactId="EBI-1050897">
        <id>P26441</id>
    </interactant>
    <interactant intactId="EBI-1030834">
        <id>P40189</id>
        <label>IL6ST</label>
    </interactant>
    <organismsDiffer>false</organismsDiffer>
    <experiments>10</experiments>
</comment>
<comment type="interaction">
    <interactant intactId="EBI-1050897">
        <id>P26441</id>
    </interactant>
    <interactant intactId="EBI-948001">
        <id>Q15323</id>
        <label>KRT31</label>
    </interactant>
    <organismsDiffer>false</organismsDiffer>
    <experiments>3</experiments>
</comment>
<comment type="interaction">
    <interactant intactId="EBI-1050897">
        <id>P26441</id>
    </interactant>
    <interactant intactId="EBI-10171697">
        <id>Q6A162</id>
        <label>KRT40</label>
    </interactant>
    <organismsDiffer>false</organismsDiffer>
    <experiments>3</experiments>
</comment>
<comment type="interaction">
    <interactant intactId="EBI-1050897">
        <id>P26441</id>
    </interactant>
    <interactant intactId="EBI-7702162">
        <id>P42702</id>
        <label>LIFR</label>
    </interactant>
    <organismsDiffer>false</organismsDiffer>
    <experiments>9</experiments>
</comment>
<comment type="interaction">
    <interactant intactId="EBI-1050897">
        <id>P26441</id>
    </interactant>
    <interactant intactId="EBI-1246261">
        <id>O14561</id>
        <label>NDUFAB1</label>
    </interactant>
    <organismsDiffer>false</organismsDiffer>
    <experiments>3</experiments>
</comment>
<comment type="interaction">
    <interactant intactId="EBI-1050897">
        <id>P26441</id>
    </interactant>
    <interactant intactId="EBI-10288724">
        <id>Q8NG50</id>
        <label>RDM1</label>
    </interactant>
    <organismsDiffer>false</organismsDiffer>
    <experiments>3</experiments>
</comment>
<comment type="interaction">
    <interactant intactId="EBI-1050897">
        <id>P26441</id>
    </interactant>
    <interactant intactId="EBI-1057058">
        <id>Q99523</id>
        <label>SORT1</label>
    </interactant>
    <organismsDiffer>false</organismsDiffer>
    <experiments>6</experiments>
</comment>
<comment type="interaction">
    <interactant intactId="EBI-1050897">
        <id>P26441</id>
    </interactant>
    <interactant intactId="EBI-11139477">
        <id>Q96N21</id>
        <label>TEPSIN</label>
    </interactant>
    <organismsDiffer>false</organismsDiffer>
    <experiments>3</experiments>
</comment>
<comment type="interaction">
    <interactant intactId="EBI-1050897">
        <id>P26441</id>
    </interactant>
    <interactant intactId="EBI-742327">
        <id>Q15654</id>
        <label>TRIP6</label>
    </interactant>
    <organismsDiffer>false</organismsDiffer>
    <experiments>3</experiments>
</comment>
<comment type="subcellular location">
    <subcellularLocation>
        <location>Cytoplasm</location>
    </subcellularLocation>
</comment>
<comment type="tissue specificity">
    <text>Nervous system.</text>
</comment>
<comment type="similarity">
    <text evidence="2">Belongs to the CNTF family.</text>
</comment>
<comment type="online information" name="Wikipedia">
    <link uri="https://en.wikipedia.org/wiki/Ciliary_neurotrophic_factor"/>
    <text>Ciliary neurotrophic factor entry</text>
</comment>
<proteinExistence type="evidence at protein level"/>
<organism>
    <name type="scientific">Homo sapiens</name>
    <name type="common">Human</name>
    <dbReference type="NCBI Taxonomy" id="9606"/>
    <lineage>
        <taxon>Eukaryota</taxon>
        <taxon>Metazoa</taxon>
        <taxon>Chordata</taxon>
        <taxon>Craniata</taxon>
        <taxon>Vertebrata</taxon>
        <taxon>Euteleostomi</taxon>
        <taxon>Mammalia</taxon>
        <taxon>Eutheria</taxon>
        <taxon>Euarchontoglires</taxon>
        <taxon>Primates</taxon>
        <taxon>Haplorrhini</taxon>
        <taxon>Catarrhini</taxon>
        <taxon>Hominidae</taxon>
        <taxon>Homo</taxon>
    </lineage>
</organism>
<keyword id="KW-0002">3D-structure</keyword>
<keyword id="KW-0963">Cytoplasm</keyword>
<keyword id="KW-0217">Developmental protein</keyword>
<keyword id="KW-0221">Differentiation</keyword>
<keyword id="KW-0339">Growth factor</keyword>
<keyword id="KW-0524">Neurogenesis</keyword>
<keyword id="KW-1185">Reference proteome</keyword>
<feature type="chain" id="PRO_0000149519" description="Ciliary neurotrophic factor">
    <location>
        <begin position="1"/>
        <end position="200"/>
    </location>
</feature>
<feature type="sequence variant" id="VAR_033777" description="In dbSNP:rs17152779.">
    <original>N</original>
    <variation>S</variation>
    <location>
        <position position="49"/>
    </location>
</feature>
<feature type="sequence variant" id="VAR_013924" description="In dbSNP:rs6266." evidence="1">
    <original>H</original>
    <variation>R</variation>
    <location>
        <position position="182"/>
    </location>
</feature>
<feature type="helix" evidence="3">
    <location>
        <begin position="13"/>
        <end position="41"/>
    </location>
</feature>
<feature type="turn" evidence="4">
    <location>
        <begin position="64"/>
        <end position="66"/>
    </location>
</feature>
<feature type="helix" evidence="3">
    <location>
        <begin position="69"/>
        <end position="95"/>
    </location>
</feature>
<feature type="turn" evidence="3">
    <location>
        <begin position="96"/>
        <end position="98"/>
    </location>
</feature>
<feature type="strand" evidence="3">
    <location>
        <begin position="99"/>
        <end position="101"/>
    </location>
</feature>
<feature type="helix" evidence="3">
    <location>
        <begin position="104"/>
        <end position="129"/>
    </location>
</feature>
<feature type="strand" evidence="3">
    <location>
        <begin position="138"/>
        <end position="140"/>
    </location>
</feature>
<feature type="helix" evidence="3">
    <location>
        <begin position="152"/>
        <end position="180"/>
    </location>
</feature>
<dbReference type="EMBL" id="X60542">
    <property type="protein sequence ID" value="CAA43032.1"/>
    <property type="molecule type" value="Genomic_DNA"/>
</dbReference>
<dbReference type="EMBL" id="X60477">
    <property type="protein sequence ID" value="CAA43009.1"/>
    <property type="molecule type" value="Genomic_DNA"/>
</dbReference>
<dbReference type="EMBL" id="X60478">
    <property type="protein sequence ID" value="CAA43009.1"/>
    <property type="status" value="JOINED"/>
    <property type="molecule type" value="Genomic_DNA"/>
</dbReference>
<dbReference type="EMBL" id="X55889">
    <property type="protein sequence ID" value="CAA39374.1"/>
    <property type="molecule type" value="Genomic_DNA"/>
</dbReference>
<dbReference type="EMBL" id="X55890">
    <property type="protein sequence ID" value="CAA39374.1"/>
    <property type="status" value="JOINED"/>
    <property type="molecule type" value="Genomic_DNA"/>
</dbReference>
<dbReference type="EMBL" id="AK314118">
    <property type="protein sequence ID" value="BAG36809.1"/>
    <property type="molecule type" value="mRNA"/>
</dbReference>
<dbReference type="EMBL" id="CH471076">
    <property type="protein sequence ID" value="EAW73819.1"/>
    <property type="molecule type" value="Genomic_DNA"/>
</dbReference>
<dbReference type="EMBL" id="BC068030">
    <property type="protein sequence ID" value="AAH68030.1"/>
    <property type="molecule type" value="mRNA"/>
</dbReference>
<dbReference type="EMBL" id="BC074963">
    <property type="protein sequence ID" value="AAH74963.1"/>
    <property type="molecule type" value="mRNA"/>
</dbReference>
<dbReference type="EMBL" id="BC074964">
    <property type="protein sequence ID" value="AAH74964.1"/>
    <property type="molecule type" value="mRNA"/>
</dbReference>
<dbReference type="CCDS" id="CCDS31554.1"/>
<dbReference type="PIR" id="JH0455">
    <property type="entry name" value="UNHUCF"/>
</dbReference>
<dbReference type="RefSeq" id="NP_000605.1">
    <property type="nucleotide sequence ID" value="NM_000614.4"/>
</dbReference>
<dbReference type="PDB" id="1CNT">
    <property type="method" value="X-ray"/>
    <property type="resolution" value="2.40 A"/>
    <property type="chains" value="1/2/3/4=1-187"/>
</dbReference>
<dbReference type="PDB" id="8D74">
    <property type="method" value="EM"/>
    <property type="resolution" value="3.03 A"/>
    <property type="chains" value="D=1-186"/>
</dbReference>
<dbReference type="PDBsum" id="1CNT"/>
<dbReference type="PDBsum" id="8D74"/>
<dbReference type="EMDB" id="EMD-27227"/>
<dbReference type="SMR" id="P26441"/>
<dbReference type="BioGRID" id="107670">
    <property type="interactions" value="26"/>
</dbReference>
<dbReference type="CORUM" id="P26441"/>
<dbReference type="DIP" id="DIP-5776N"/>
<dbReference type="FunCoup" id="P26441">
    <property type="interactions" value="371"/>
</dbReference>
<dbReference type="IntAct" id="P26441">
    <property type="interactions" value="21"/>
</dbReference>
<dbReference type="MINT" id="P26441"/>
<dbReference type="STRING" id="9606.ENSP00000355370"/>
<dbReference type="PhosphoSitePlus" id="P26441"/>
<dbReference type="BioMuta" id="CNTF"/>
<dbReference type="MassIVE" id="P26441"/>
<dbReference type="PaxDb" id="9606-ENSP00000355370"/>
<dbReference type="PeptideAtlas" id="P26441"/>
<dbReference type="ProteomicsDB" id="54349"/>
<dbReference type="Antibodypedia" id="34925">
    <property type="antibodies" value="644 antibodies from 39 providers"/>
</dbReference>
<dbReference type="DNASU" id="1270"/>
<dbReference type="Ensembl" id="ENST00000361987.6">
    <property type="protein sequence ID" value="ENSP00000355370.4"/>
    <property type="gene ID" value="ENSG00000242689.3"/>
</dbReference>
<dbReference type="GeneID" id="1270"/>
<dbReference type="KEGG" id="hsa:1270"/>
<dbReference type="MANE-Select" id="ENST00000361987.6">
    <property type="protein sequence ID" value="ENSP00000355370.4"/>
    <property type="RefSeq nucleotide sequence ID" value="NM_000614.4"/>
    <property type="RefSeq protein sequence ID" value="NP_000605.1"/>
</dbReference>
<dbReference type="UCSC" id="uc001nna.5">
    <property type="organism name" value="human"/>
</dbReference>
<dbReference type="AGR" id="HGNC:2169"/>
<dbReference type="CTD" id="1270"/>
<dbReference type="DisGeNET" id="1270"/>
<dbReference type="GeneCards" id="CNTF"/>
<dbReference type="HGNC" id="HGNC:2169">
    <property type="gene designation" value="CNTF"/>
</dbReference>
<dbReference type="HPA" id="ENSG00000242689">
    <property type="expression patterns" value="Tissue enhanced (bone marrow, brain)"/>
</dbReference>
<dbReference type="MIM" id="118945">
    <property type="type" value="gene"/>
</dbReference>
<dbReference type="neXtProt" id="NX_P26441"/>
<dbReference type="OpenTargets" id="ENSG00000242689"/>
<dbReference type="PharmGKB" id="PA26683"/>
<dbReference type="VEuPathDB" id="HostDB:ENSG00000242689"/>
<dbReference type="eggNOG" id="ENOG502S4XX">
    <property type="taxonomic scope" value="Eukaryota"/>
</dbReference>
<dbReference type="GeneTree" id="ENSGT00420000029890"/>
<dbReference type="HOGENOM" id="CLU_118647_0_0_1"/>
<dbReference type="InParanoid" id="P26441"/>
<dbReference type="OMA" id="RWSEMTE"/>
<dbReference type="OrthoDB" id="9510890at2759"/>
<dbReference type="PAN-GO" id="P26441">
    <property type="GO annotations" value="11 GO annotations based on evolutionary models"/>
</dbReference>
<dbReference type="PhylomeDB" id="P26441"/>
<dbReference type="TreeFam" id="TF336237"/>
<dbReference type="PathwayCommons" id="P26441"/>
<dbReference type="Reactome" id="R-HSA-6788467">
    <property type="pathway name" value="IL-6-type cytokine receptor ligand interactions"/>
</dbReference>
<dbReference type="SignaLink" id="P26441"/>
<dbReference type="SIGNOR" id="P26441"/>
<dbReference type="BioGRID-ORCS" id="1270">
    <property type="hits" value="12 hits in 1158 CRISPR screens"/>
</dbReference>
<dbReference type="EvolutionaryTrace" id="P26441"/>
<dbReference type="GeneWiki" id="Ciliary_neurotrophic_factor"/>
<dbReference type="GenomeRNAi" id="1270"/>
<dbReference type="Pharos" id="P26441">
    <property type="development level" value="Tbio"/>
</dbReference>
<dbReference type="PRO" id="PR:P26441"/>
<dbReference type="Proteomes" id="UP000005640">
    <property type="component" value="Chromosome 11"/>
</dbReference>
<dbReference type="RNAct" id="P26441">
    <property type="molecule type" value="protein"/>
</dbReference>
<dbReference type="Bgee" id="ENSG00000242689">
    <property type="expression patterns" value="Expressed in male germ line stem cell (sensu Vertebrata) in testis and 97 other cell types or tissues"/>
</dbReference>
<dbReference type="GO" id="GO:0030424">
    <property type="term" value="C:axon"/>
    <property type="evidence" value="ECO:0000318"/>
    <property type="project" value="GO_Central"/>
</dbReference>
<dbReference type="GO" id="GO:0005737">
    <property type="term" value="C:cytoplasm"/>
    <property type="evidence" value="ECO:0007669"/>
    <property type="project" value="UniProtKB-SubCell"/>
</dbReference>
<dbReference type="GO" id="GO:0005576">
    <property type="term" value="C:extracellular region"/>
    <property type="evidence" value="ECO:0000304"/>
    <property type="project" value="Reactome"/>
</dbReference>
<dbReference type="GO" id="GO:0005615">
    <property type="term" value="C:extracellular space"/>
    <property type="evidence" value="ECO:0000305"/>
    <property type="project" value="BHF-UCL"/>
</dbReference>
<dbReference type="GO" id="GO:0097386">
    <property type="term" value="C:glial cell projection"/>
    <property type="evidence" value="ECO:0000318"/>
    <property type="project" value="GO_Central"/>
</dbReference>
<dbReference type="GO" id="GO:0043025">
    <property type="term" value="C:neuronal cell body"/>
    <property type="evidence" value="ECO:0000318"/>
    <property type="project" value="GO_Central"/>
</dbReference>
<dbReference type="GO" id="GO:0005127">
    <property type="term" value="F:ciliary neurotrophic factor receptor binding"/>
    <property type="evidence" value="ECO:0000318"/>
    <property type="project" value="GO_Central"/>
</dbReference>
<dbReference type="GO" id="GO:0005125">
    <property type="term" value="F:cytokine activity"/>
    <property type="evidence" value="ECO:0000318"/>
    <property type="project" value="GO_Central"/>
</dbReference>
<dbReference type="GO" id="GO:0008083">
    <property type="term" value="F:growth factor activity"/>
    <property type="evidence" value="ECO:0000314"/>
    <property type="project" value="BHF-UCL"/>
</dbReference>
<dbReference type="GO" id="GO:0005138">
    <property type="term" value="F:interleukin-6 receptor binding"/>
    <property type="evidence" value="ECO:0000353"/>
    <property type="project" value="BHF-UCL"/>
</dbReference>
<dbReference type="GO" id="GO:0044877">
    <property type="term" value="F:protein-containing complex binding"/>
    <property type="evidence" value="ECO:0000353"/>
    <property type="project" value="BHF-UCL"/>
</dbReference>
<dbReference type="GO" id="GO:0048143">
    <property type="term" value="P:astrocyte activation"/>
    <property type="evidence" value="ECO:0000318"/>
    <property type="project" value="GO_Central"/>
</dbReference>
<dbReference type="GO" id="GO:0007259">
    <property type="term" value="P:cell surface receptor signaling pathway via JAK-STAT"/>
    <property type="evidence" value="ECO:0000318"/>
    <property type="project" value="GO_Central"/>
</dbReference>
<dbReference type="GO" id="GO:0097696">
    <property type="term" value="P:cell surface receptor signaling pathway via STAT"/>
    <property type="evidence" value="ECO:0000314"/>
    <property type="project" value="BHF-UCL"/>
</dbReference>
<dbReference type="GO" id="GO:0070120">
    <property type="term" value="P:ciliary neurotrophic factor-mediated signaling pathway"/>
    <property type="evidence" value="ECO:0000314"/>
    <property type="project" value="BHF-UCL"/>
</dbReference>
<dbReference type="GO" id="GO:0048644">
    <property type="term" value="P:muscle organ morphogenesis"/>
    <property type="evidence" value="ECO:0007669"/>
    <property type="project" value="Ensembl"/>
</dbReference>
<dbReference type="GO" id="GO:0043524">
    <property type="term" value="P:negative regulation of neuron apoptotic process"/>
    <property type="evidence" value="ECO:0000314"/>
    <property type="project" value="BHF-UCL"/>
</dbReference>
<dbReference type="GO" id="GO:0046533">
    <property type="term" value="P:negative regulation of photoreceptor cell differentiation"/>
    <property type="evidence" value="ECO:0007669"/>
    <property type="project" value="Ensembl"/>
</dbReference>
<dbReference type="GO" id="GO:0048666">
    <property type="term" value="P:neuron development"/>
    <property type="evidence" value="ECO:0007669"/>
    <property type="project" value="Ensembl"/>
</dbReference>
<dbReference type="GO" id="GO:0048680">
    <property type="term" value="P:positive regulation of axon regeneration"/>
    <property type="evidence" value="ECO:0000318"/>
    <property type="project" value="GO_Central"/>
</dbReference>
<dbReference type="GO" id="GO:0008284">
    <property type="term" value="P:positive regulation of cell population proliferation"/>
    <property type="evidence" value="ECO:0007669"/>
    <property type="project" value="Ensembl"/>
</dbReference>
<dbReference type="GO" id="GO:0010628">
    <property type="term" value="P:positive regulation of gene expression"/>
    <property type="evidence" value="ECO:0000314"/>
    <property type="project" value="MGI"/>
</dbReference>
<dbReference type="GO" id="GO:0042531">
    <property type="term" value="P:positive regulation of tyrosine phosphorylation of STAT protein"/>
    <property type="evidence" value="ECO:0000314"/>
    <property type="project" value="CACAO"/>
</dbReference>
<dbReference type="GO" id="GO:0046668">
    <property type="term" value="P:regulation of retinal cell programmed cell death"/>
    <property type="evidence" value="ECO:0007669"/>
    <property type="project" value="Ensembl"/>
</dbReference>
<dbReference type="GO" id="GO:0060221">
    <property type="term" value="P:retinal rod cell differentiation"/>
    <property type="evidence" value="ECO:0007669"/>
    <property type="project" value="Ensembl"/>
</dbReference>
<dbReference type="GO" id="GO:0007165">
    <property type="term" value="P:signal transduction"/>
    <property type="evidence" value="ECO:0000303"/>
    <property type="project" value="ProtInc"/>
</dbReference>
<dbReference type="FunFam" id="1.20.1250.10:FF:000022">
    <property type="entry name" value="ciliary neurotrophic factor"/>
    <property type="match status" value="1"/>
</dbReference>
<dbReference type="Gene3D" id="1.20.1250.10">
    <property type="match status" value="1"/>
</dbReference>
<dbReference type="InterPro" id="IPR009079">
    <property type="entry name" value="4_helix_cytokine-like_core"/>
</dbReference>
<dbReference type="InterPro" id="IPR000151">
    <property type="entry name" value="Ciliary_neurotrophic_fac_CNTF"/>
</dbReference>
<dbReference type="PANTHER" id="PTHR15196">
    <property type="entry name" value="CILIARY NEUROTROPHIC FACTOR"/>
    <property type="match status" value="1"/>
</dbReference>
<dbReference type="PANTHER" id="PTHR15196:SF0">
    <property type="entry name" value="CILIARY NEUROTROPHIC FACTOR"/>
    <property type="match status" value="1"/>
</dbReference>
<dbReference type="Pfam" id="PF01110">
    <property type="entry name" value="CNTF"/>
    <property type="match status" value="1"/>
</dbReference>
<dbReference type="SUPFAM" id="SSF47266">
    <property type="entry name" value="4-helical cytokines"/>
    <property type="match status" value="1"/>
</dbReference>
<reference key="1">
    <citation type="journal article" date="1991" name="J. Neurochem.">
        <title>Recombinant human and rat ciliary neurotrophic factors.</title>
        <authorList>
            <person name="Masiakowski P."/>
            <person name="Liu H."/>
            <person name="Radziejewski C."/>
            <person name="Lottspeich F."/>
            <person name="Oberthuer W."/>
            <person name="Wong V."/>
            <person name="Lindsay R.M."/>
            <person name="Furth M.E."/>
            <person name="Panayotatos N."/>
        </authorList>
    </citation>
    <scope>NUCLEOTIDE SEQUENCE [GENOMIC DNA]</scope>
</reference>
<reference key="2">
    <citation type="journal article" date="1991" name="Eur. J. Biochem.">
        <title>Cloning and expression of human ciliary neurotrophic factor.</title>
        <authorList>
            <person name="Negro A."/>
            <person name="Tolosano E."/>
            <person name="Skaper S."/>
            <person name="Martini I."/>
            <person name="Callegaro L."/>
            <person name="Silengo L."/>
            <person name="Fiorini F."/>
            <person name="Altruda F."/>
        </authorList>
    </citation>
    <scope>NUCLEOTIDE SEQUENCE [GENOMIC DNA]</scope>
</reference>
<reference key="3">
    <citation type="journal article" date="1991" name="Gene">
        <title>Sequence and structural organization of the human gene encoding ciliary neurotrophic factor.</title>
        <authorList>
            <person name="Lam A."/>
            <person name="Fuller F."/>
            <person name="Miller J."/>
            <person name="Kloss J."/>
            <person name="Manthorpe M."/>
            <person name="Varon M."/>
            <person name="Cordell B."/>
        </authorList>
    </citation>
    <scope>NUCLEOTIDE SEQUENCE [GENOMIC DNA]</scope>
    <source>
        <tissue>Lung</tissue>
    </source>
</reference>
<reference key="4">
    <citation type="journal article" date="1991" name="Biochim. Biophys. Acta">
        <title>Expression and characterization of recombinant human ciliary neurotrophic factor from Escherichia coli.</title>
        <authorList>
            <person name="McDonald J.R."/>
            <person name="Ko C."/>
            <person name="Mismer D."/>
            <person name="Smith D.J."/>
            <person name="Collins F."/>
        </authorList>
    </citation>
    <scope>NUCLEOTIDE SEQUENCE [GENOMIC DNA]</scope>
</reference>
<reference key="5">
    <citation type="journal article" date="1994" name="Nat. Genet.">
        <title>A null mutation in the human CNTF gene is not causally related to neurological diseases.</title>
        <authorList>
            <person name="Takahashi R."/>
            <person name="Yokoji H."/>
            <person name="Misawa H."/>
            <person name="Hayashi M."/>
            <person name="Hu J."/>
            <person name="Deguchi T."/>
        </authorList>
    </citation>
    <scope>NUCLEOTIDE SEQUENCE [MRNA]</scope>
    <source>
        <tissue>Sciatic nerve</tissue>
    </source>
</reference>
<reference key="6">
    <citation type="journal article" date="2004" name="Nat. Genet.">
        <title>Complete sequencing and characterization of 21,243 full-length human cDNAs.</title>
        <authorList>
            <person name="Ota T."/>
            <person name="Suzuki Y."/>
            <person name="Nishikawa T."/>
            <person name="Otsuki T."/>
            <person name="Sugiyama T."/>
            <person name="Irie R."/>
            <person name="Wakamatsu A."/>
            <person name="Hayashi K."/>
            <person name="Sato H."/>
            <person name="Nagai K."/>
            <person name="Kimura K."/>
            <person name="Makita H."/>
            <person name="Sekine M."/>
            <person name="Obayashi M."/>
            <person name="Nishi T."/>
            <person name="Shibahara T."/>
            <person name="Tanaka T."/>
            <person name="Ishii S."/>
            <person name="Yamamoto J."/>
            <person name="Saito K."/>
            <person name="Kawai Y."/>
            <person name="Isono Y."/>
            <person name="Nakamura Y."/>
            <person name="Nagahari K."/>
            <person name="Murakami K."/>
            <person name="Yasuda T."/>
            <person name="Iwayanagi T."/>
            <person name="Wagatsuma M."/>
            <person name="Shiratori A."/>
            <person name="Sudo H."/>
            <person name="Hosoiri T."/>
            <person name="Kaku Y."/>
            <person name="Kodaira H."/>
            <person name="Kondo H."/>
            <person name="Sugawara M."/>
            <person name="Takahashi M."/>
            <person name="Kanda K."/>
            <person name="Yokoi T."/>
            <person name="Furuya T."/>
            <person name="Kikkawa E."/>
            <person name="Omura Y."/>
            <person name="Abe K."/>
            <person name="Kamihara K."/>
            <person name="Katsuta N."/>
            <person name="Sato K."/>
            <person name="Tanikawa M."/>
            <person name="Yamazaki M."/>
            <person name="Ninomiya K."/>
            <person name="Ishibashi T."/>
            <person name="Yamashita H."/>
            <person name="Murakawa K."/>
            <person name="Fujimori K."/>
            <person name="Tanai H."/>
            <person name="Kimata M."/>
            <person name="Watanabe M."/>
            <person name="Hiraoka S."/>
            <person name="Chiba Y."/>
            <person name="Ishida S."/>
            <person name="Ono Y."/>
            <person name="Takiguchi S."/>
            <person name="Watanabe S."/>
            <person name="Yosida M."/>
            <person name="Hotuta T."/>
            <person name="Kusano J."/>
            <person name="Kanehori K."/>
            <person name="Takahashi-Fujii A."/>
            <person name="Hara H."/>
            <person name="Tanase T.-O."/>
            <person name="Nomura Y."/>
            <person name="Togiya S."/>
            <person name="Komai F."/>
            <person name="Hara R."/>
            <person name="Takeuchi K."/>
            <person name="Arita M."/>
            <person name="Imose N."/>
            <person name="Musashino K."/>
            <person name="Yuuki H."/>
            <person name="Oshima A."/>
            <person name="Sasaki N."/>
            <person name="Aotsuka S."/>
            <person name="Yoshikawa Y."/>
            <person name="Matsunawa H."/>
            <person name="Ichihara T."/>
            <person name="Shiohata N."/>
            <person name="Sano S."/>
            <person name="Moriya S."/>
            <person name="Momiyama H."/>
            <person name="Satoh N."/>
            <person name="Takami S."/>
            <person name="Terashima Y."/>
            <person name="Suzuki O."/>
            <person name="Nakagawa S."/>
            <person name="Senoh A."/>
            <person name="Mizoguchi H."/>
            <person name="Goto Y."/>
            <person name="Shimizu F."/>
            <person name="Wakebe H."/>
            <person name="Hishigaki H."/>
            <person name="Watanabe T."/>
            <person name="Sugiyama A."/>
            <person name="Takemoto M."/>
            <person name="Kawakami B."/>
            <person name="Yamazaki M."/>
            <person name="Watanabe K."/>
            <person name="Kumagai A."/>
            <person name="Itakura S."/>
            <person name="Fukuzumi Y."/>
            <person name="Fujimori Y."/>
            <person name="Komiyama M."/>
            <person name="Tashiro H."/>
            <person name="Tanigami A."/>
            <person name="Fujiwara T."/>
            <person name="Ono T."/>
            <person name="Yamada K."/>
            <person name="Fujii Y."/>
            <person name="Ozaki K."/>
            <person name="Hirao M."/>
            <person name="Ohmori Y."/>
            <person name="Kawabata A."/>
            <person name="Hikiji T."/>
            <person name="Kobatake N."/>
            <person name="Inagaki H."/>
            <person name="Ikema Y."/>
            <person name="Okamoto S."/>
            <person name="Okitani R."/>
            <person name="Kawakami T."/>
            <person name="Noguchi S."/>
            <person name="Itoh T."/>
            <person name="Shigeta K."/>
            <person name="Senba T."/>
            <person name="Matsumura K."/>
            <person name="Nakajima Y."/>
            <person name="Mizuno T."/>
            <person name="Morinaga M."/>
            <person name="Sasaki M."/>
            <person name="Togashi T."/>
            <person name="Oyama M."/>
            <person name="Hata H."/>
            <person name="Watanabe M."/>
            <person name="Komatsu T."/>
            <person name="Mizushima-Sugano J."/>
            <person name="Satoh T."/>
            <person name="Shirai Y."/>
            <person name="Takahashi Y."/>
            <person name="Nakagawa K."/>
            <person name="Okumura K."/>
            <person name="Nagase T."/>
            <person name="Nomura N."/>
            <person name="Kikuchi H."/>
            <person name="Masuho Y."/>
            <person name="Yamashita R."/>
            <person name="Nakai K."/>
            <person name="Yada T."/>
            <person name="Nakamura Y."/>
            <person name="Ohara O."/>
            <person name="Isogai T."/>
            <person name="Sugano S."/>
        </authorList>
    </citation>
    <scope>NUCLEOTIDE SEQUENCE [LARGE SCALE MRNA]</scope>
    <source>
        <tissue>Brain</tissue>
    </source>
</reference>
<reference key="7">
    <citation type="submission" date="2005-07" db="EMBL/GenBank/DDBJ databases">
        <authorList>
            <person name="Mural R.J."/>
            <person name="Istrail S."/>
            <person name="Sutton G.G."/>
            <person name="Florea L."/>
            <person name="Halpern A.L."/>
            <person name="Mobarry C.M."/>
            <person name="Lippert R."/>
            <person name="Walenz B."/>
            <person name="Shatkay H."/>
            <person name="Dew I."/>
            <person name="Miller J.R."/>
            <person name="Flanigan M.J."/>
            <person name="Edwards N.J."/>
            <person name="Bolanos R."/>
            <person name="Fasulo D."/>
            <person name="Halldorsson B.V."/>
            <person name="Hannenhalli S."/>
            <person name="Turner R."/>
            <person name="Yooseph S."/>
            <person name="Lu F."/>
            <person name="Nusskern D.R."/>
            <person name="Shue B.C."/>
            <person name="Zheng X.H."/>
            <person name="Zhong F."/>
            <person name="Delcher A.L."/>
            <person name="Huson D.H."/>
            <person name="Kravitz S.A."/>
            <person name="Mouchard L."/>
            <person name="Reinert K."/>
            <person name="Remington K.A."/>
            <person name="Clark A.G."/>
            <person name="Waterman M.S."/>
            <person name="Eichler E.E."/>
            <person name="Adams M.D."/>
            <person name="Hunkapiller M.W."/>
            <person name="Myers E.W."/>
            <person name="Venter J.C."/>
        </authorList>
    </citation>
    <scope>NUCLEOTIDE SEQUENCE [LARGE SCALE GENOMIC DNA]</scope>
</reference>
<reference key="8">
    <citation type="journal article" date="2004" name="Genome Res.">
        <title>The status, quality, and expansion of the NIH full-length cDNA project: the Mammalian Gene Collection (MGC).</title>
        <authorList>
            <consortium name="The MGC Project Team"/>
        </authorList>
    </citation>
    <scope>NUCLEOTIDE SEQUENCE [LARGE SCALE MRNA]</scope>
    <source>
        <tissue>Brain</tissue>
    </source>
</reference>
<reference key="9">
    <citation type="journal article" date="1995" name="EMBO J.">
        <title>Crystal structure of dimeric human ciliary neurotrophic factor determined by MAD phasing.</title>
        <authorList>
            <person name="McDonald N.Q."/>
            <person name="Panayotatos N."/>
            <person name="Hendrickson W.A."/>
        </authorList>
    </citation>
    <scope>X-RAY CRYSTALLOGRAPHY (2.4 ANGSTROMS) OF 1-187</scope>
</reference>
<reference key="10">
    <citation type="journal article" date="1999" name="Nat. Genet.">
        <title>Characterization of single-nucleotide polymorphisms in coding regions of human genes.</title>
        <authorList>
            <person name="Cargill M."/>
            <person name="Altshuler D."/>
            <person name="Ireland J."/>
            <person name="Sklar P."/>
            <person name="Ardlie K."/>
            <person name="Patil N."/>
            <person name="Shaw N."/>
            <person name="Lane C.R."/>
            <person name="Lim E.P."/>
            <person name="Kalyanaraman N."/>
            <person name="Nemesh J."/>
            <person name="Ziaugra L."/>
            <person name="Friedland L."/>
            <person name="Rolfe A."/>
            <person name="Warrington J."/>
            <person name="Lipshutz R."/>
            <person name="Daley G.Q."/>
            <person name="Lander E.S."/>
        </authorList>
    </citation>
    <scope>VARIANT ARG-182</scope>
</reference>
<reference key="11">
    <citation type="journal article" date="1999" name="Nat. Genet.">
        <authorList>
            <person name="Cargill M."/>
            <person name="Altshuler D."/>
            <person name="Ireland J."/>
            <person name="Sklar P."/>
            <person name="Ardlie K."/>
            <person name="Patil N."/>
            <person name="Shaw N."/>
            <person name="Lane C.R."/>
            <person name="Lim E.P."/>
            <person name="Kalyanaraman N."/>
            <person name="Nemesh J."/>
            <person name="Ziaugra L."/>
            <person name="Friedland L."/>
            <person name="Rolfe A."/>
            <person name="Warrington J."/>
            <person name="Lipshutz R."/>
            <person name="Daley G.Q."/>
            <person name="Lander E.S."/>
        </authorList>
    </citation>
    <scope>ERRATUM OF PUBMED:10391209</scope>
</reference>
<evidence type="ECO:0000269" key="1">
    <source>
    </source>
</evidence>
<evidence type="ECO:0000305" key="2"/>
<evidence type="ECO:0007829" key="3">
    <source>
        <dbReference type="PDB" id="1CNT"/>
    </source>
</evidence>
<evidence type="ECO:0007829" key="4">
    <source>
        <dbReference type="PDB" id="8D74"/>
    </source>
</evidence>
<accession>P26441</accession>
<accession>B2RAB2</accession>
<name>CNTF_HUMAN</name>
<gene>
    <name type="primary">CNTF</name>
</gene>
<protein>
    <recommendedName>
        <fullName>Ciliary neurotrophic factor</fullName>
        <shortName>CNTF</shortName>
    </recommendedName>
</protein>
<sequence>MAFTEHSPLTPHRRDLCSRSIWLARKIRSDLTALTESYVKHQGLNKNINLDSADGMPVASTDQWSELTEAERLQENLQAYRTFHVLLARLLEDQQVHFTPTEGDFHQAIHTLLLQVAAFAYQIEELMILLEYKIPRNEADGMPINVGDGGLFEKKLWGLKVLQELSQWTVRSIHDLRFISSHQTGIPARGSHYIANNKKM</sequence>